<accession>B5YJE1</accession>
<sequence>MLPEPVSCPDWLIAQEAEKRMKSIFQLAEELDIKKEELIPYGSYIAKIDYRKLYSRIKNNPNGKYIIVTAITPTPFGEGKSTTTIGLTQGLGKRGKKVSCAIRQPSAGPLMNIKGSAAGGGLSQCIPRTEFSLGFTGDINAVMNAHNLAMVALTSRMLHEANYSDEILKKRGLRRLDIDPKRVQMGWVIDFCVQALRKIVIGLGGKKDGITMESRFDIATSSELMAILSLVKDLKELKKRISSIVVAYSKTGNPITTEDLEVSGAMSALMLPAFNPNLIQTIEGQPVFVHAAPFANIAIGQSSIIADMVGLKLNEYHVTECGFGADIGFEKFWNIKCRTSGLKPDVAVLVATLRALKYHGADKDSPKIIPGNPLPKEYIEKNMQWLERGMKNLFHHIKIIKKSGLSIVVCINKFQSDTHEELDFVRKFCEEMGIPVAISEHWQKGGQGALELADFVIDACKNNSNFNFLYENSLPHISRIELIAREIYGADSVEFSPLALEKLQSINSKKEFSDFAICIAKTHLSLSDNPLLRGVPEGWQLFIRDILVFYGAKLIVPVAGEISLMPGTASTPNFRTIDVDLQTGKVTGI</sequence>
<organism>
    <name type="scientific">Thermodesulfovibrio yellowstonii (strain ATCC 51303 / DSM 11347 / YP87)</name>
    <dbReference type="NCBI Taxonomy" id="289376"/>
    <lineage>
        <taxon>Bacteria</taxon>
        <taxon>Pseudomonadati</taxon>
        <taxon>Nitrospirota</taxon>
        <taxon>Thermodesulfovibrionia</taxon>
        <taxon>Thermodesulfovibrionales</taxon>
        <taxon>Thermodesulfovibrionaceae</taxon>
        <taxon>Thermodesulfovibrio</taxon>
    </lineage>
</organism>
<proteinExistence type="inferred from homology"/>
<dbReference type="EC" id="6.3.4.3" evidence="1"/>
<dbReference type="EMBL" id="CP001147">
    <property type="protein sequence ID" value="ACI21937.1"/>
    <property type="molecule type" value="Genomic_DNA"/>
</dbReference>
<dbReference type="RefSeq" id="WP_012546634.1">
    <property type="nucleotide sequence ID" value="NC_011296.1"/>
</dbReference>
<dbReference type="RefSeq" id="YP_002248356.1">
    <property type="nucleotide sequence ID" value="NC_011296.1"/>
</dbReference>
<dbReference type="SMR" id="B5YJE1"/>
<dbReference type="STRING" id="289376.THEYE_A0513"/>
<dbReference type="EnsemblBacteria" id="ACI21937">
    <property type="protein sequence ID" value="ACI21937"/>
    <property type="gene ID" value="THEYE_A0513"/>
</dbReference>
<dbReference type="KEGG" id="tye:THEYE_A0513"/>
<dbReference type="PATRIC" id="fig|289376.4.peg.507"/>
<dbReference type="eggNOG" id="COG2759">
    <property type="taxonomic scope" value="Bacteria"/>
</dbReference>
<dbReference type="HOGENOM" id="CLU_003601_3_3_0"/>
<dbReference type="InParanoid" id="B5YJE1"/>
<dbReference type="OrthoDB" id="9761733at2"/>
<dbReference type="UniPathway" id="UPA00193"/>
<dbReference type="Proteomes" id="UP000000718">
    <property type="component" value="Chromosome"/>
</dbReference>
<dbReference type="GO" id="GO:0005524">
    <property type="term" value="F:ATP binding"/>
    <property type="evidence" value="ECO:0007669"/>
    <property type="project" value="UniProtKB-UniRule"/>
</dbReference>
<dbReference type="GO" id="GO:0004329">
    <property type="term" value="F:formate-tetrahydrofolate ligase activity"/>
    <property type="evidence" value="ECO:0007669"/>
    <property type="project" value="UniProtKB-UniRule"/>
</dbReference>
<dbReference type="GO" id="GO:0035999">
    <property type="term" value="P:tetrahydrofolate interconversion"/>
    <property type="evidence" value="ECO:0007669"/>
    <property type="project" value="UniProtKB-UniRule"/>
</dbReference>
<dbReference type="CDD" id="cd00477">
    <property type="entry name" value="FTHFS"/>
    <property type="match status" value="1"/>
</dbReference>
<dbReference type="Gene3D" id="3.30.1510.10">
    <property type="entry name" value="Domain 2, N(10)-formyltetrahydrofolate synthetase"/>
    <property type="match status" value="1"/>
</dbReference>
<dbReference type="Gene3D" id="3.10.410.10">
    <property type="entry name" value="Formyltetrahydrofolate synthetase, domain 3"/>
    <property type="match status" value="1"/>
</dbReference>
<dbReference type="Gene3D" id="3.40.50.300">
    <property type="entry name" value="P-loop containing nucleotide triphosphate hydrolases"/>
    <property type="match status" value="1"/>
</dbReference>
<dbReference type="HAMAP" id="MF_01543">
    <property type="entry name" value="FTHFS"/>
    <property type="match status" value="1"/>
</dbReference>
<dbReference type="InterPro" id="IPR000559">
    <property type="entry name" value="Formate_THF_ligase"/>
</dbReference>
<dbReference type="InterPro" id="IPR020628">
    <property type="entry name" value="Formate_THF_ligase_CS"/>
</dbReference>
<dbReference type="InterPro" id="IPR027417">
    <property type="entry name" value="P-loop_NTPase"/>
</dbReference>
<dbReference type="NCBIfam" id="NF010032">
    <property type="entry name" value="PRK13507.1"/>
    <property type="match status" value="1"/>
</dbReference>
<dbReference type="Pfam" id="PF01268">
    <property type="entry name" value="FTHFS"/>
    <property type="match status" value="1"/>
</dbReference>
<dbReference type="SUPFAM" id="SSF52540">
    <property type="entry name" value="P-loop containing nucleoside triphosphate hydrolases"/>
    <property type="match status" value="1"/>
</dbReference>
<dbReference type="PROSITE" id="PS00721">
    <property type="entry name" value="FTHFS_1"/>
    <property type="match status" value="1"/>
</dbReference>
<comment type="catalytic activity">
    <reaction evidence="1">
        <text>(6S)-5,6,7,8-tetrahydrofolate + formate + ATP = (6R)-10-formyltetrahydrofolate + ADP + phosphate</text>
        <dbReference type="Rhea" id="RHEA:20221"/>
        <dbReference type="ChEBI" id="CHEBI:15740"/>
        <dbReference type="ChEBI" id="CHEBI:30616"/>
        <dbReference type="ChEBI" id="CHEBI:43474"/>
        <dbReference type="ChEBI" id="CHEBI:57453"/>
        <dbReference type="ChEBI" id="CHEBI:195366"/>
        <dbReference type="ChEBI" id="CHEBI:456216"/>
        <dbReference type="EC" id="6.3.4.3"/>
    </reaction>
</comment>
<comment type="pathway">
    <text evidence="1">One-carbon metabolism; tetrahydrofolate interconversion.</text>
</comment>
<comment type="similarity">
    <text evidence="1">Belongs to the formate--tetrahydrofolate ligase family.</text>
</comment>
<keyword id="KW-0067">ATP-binding</keyword>
<keyword id="KW-0436">Ligase</keyword>
<keyword id="KW-0547">Nucleotide-binding</keyword>
<keyword id="KW-0554">One-carbon metabolism</keyword>
<keyword id="KW-1185">Reference proteome</keyword>
<protein>
    <recommendedName>
        <fullName evidence="1">Formate--tetrahydrofolate ligase</fullName>
        <ecNumber evidence="1">6.3.4.3</ecNumber>
    </recommendedName>
    <alternativeName>
        <fullName evidence="1">Formyltetrahydrofolate synthetase</fullName>
        <shortName evidence="1">FHS</shortName>
        <shortName evidence="1">FTHFS</shortName>
    </alternativeName>
</protein>
<evidence type="ECO:0000255" key="1">
    <source>
        <dbReference type="HAMAP-Rule" id="MF_01543"/>
    </source>
</evidence>
<gene>
    <name evidence="1" type="primary">fhs</name>
    <name type="ordered locus">THEYE_A0513</name>
</gene>
<reference key="1">
    <citation type="submission" date="2008-08" db="EMBL/GenBank/DDBJ databases">
        <title>The complete genome sequence of Thermodesulfovibrio yellowstonii strain ATCC 51303 / DSM 11347 / YP87.</title>
        <authorList>
            <person name="Dodson R.J."/>
            <person name="Durkin A.S."/>
            <person name="Wu M."/>
            <person name="Eisen J."/>
            <person name="Sutton G."/>
        </authorList>
    </citation>
    <scope>NUCLEOTIDE SEQUENCE [LARGE SCALE GENOMIC DNA]</scope>
    <source>
        <strain>ATCC 51303 / DSM 11347 / YP87</strain>
    </source>
</reference>
<feature type="chain" id="PRO_1000146709" description="Formate--tetrahydrofolate ligase">
    <location>
        <begin position="1"/>
        <end position="589"/>
    </location>
</feature>
<feature type="binding site" evidence="1">
    <location>
        <begin position="74"/>
        <end position="81"/>
    </location>
    <ligand>
        <name>ATP</name>
        <dbReference type="ChEBI" id="CHEBI:30616"/>
    </ligand>
</feature>
<name>FTHS_THEYD</name>